<gene>
    <name evidence="1" type="primary">M</name>
</gene>
<reference key="1">
    <citation type="journal article" date="2006" name="Science">
        <title>Large-scale sequence analysis of avian influenza isolates.</title>
        <authorList>
            <person name="Obenauer J.C."/>
            <person name="Denson J."/>
            <person name="Mehta P.K."/>
            <person name="Su X."/>
            <person name="Mukatira S."/>
            <person name="Finkelstein D.B."/>
            <person name="Xu X."/>
            <person name="Wang J."/>
            <person name="Ma J."/>
            <person name="Fan Y."/>
            <person name="Rakestraw K.M."/>
            <person name="Webster R.G."/>
            <person name="Hoffmann E."/>
            <person name="Krauss S."/>
            <person name="Zheng J."/>
            <person name="Zhang Z."/>
            <person name="Naeve C.W."/>
        </authorList>
    </citation>
    <scope>NUCLEOTIDE SEQUENCE [GENOMIC RNA]</scope>
</reference>
<keyword id="KW-0025">Alternative splicing</keyword>
<keyword id="KW-1015">Disulfide bond</keyword>
<keyword id="KW-0325">Glycoprotein</keyword>
<keyword id="KW-1032">Host cell membrane</keyword>
<keyword id="KW-1043">Host membrane</keyword>
<keyword id="KW-0945">Host-virus interaction</keyword>
<keyword id="KW-0375">Hydrogen ion transport</keyword>
<keyword id="KW-1083">Inhibition of host autophagy by virus</keyword>
<keyword id="KW-0407">Ion channel</keyword>
<keyword id="KW-0406">Ion transport</keyword>
<keyword id="KW-0449">Lipoprotein</keyword>
<keyword id="KW-0472">Membrane</keyword>
<keyword id="KW-0564">Palmitate</keyword>
<keyword id="KW-0597">Phosphoprotein</keyword>
<keyword id="KW-0735">Signal-anchor</keyword>
<keyword id="KW-0812">Transmembrane</keyword>
<keyword id="KW-1133">Transmembrane helix</keyword>
<keyword id="KW-0813">Transport</keyword>
<keyword id="KW-1182">Viral ion channel</keyword>
<keyword id="KW-0946">Virion</keyword>
<comment type="function">
    <text evidence="1">Forms a proton-selective ion channel that is necessary for the efficient release of the viral genome during virus entry. After attaching to the cell surface, the virion enters the cell by endocytosis. Acidification of the endosome triggers M2 ion channel activity. The influx of protons into virion interior is believed to disrupt interactions between the viral ribonucleoprotein (RNP), matrix protein 1 (M1), and lipid bilayers, thereby freeing the viral genome from interaction with viral proteins and enabling RNA segments to migrate to the host cell nucleus, where influenza virus RNA transcription and replication occur. Also plays a role in viral proteins secretory pathway. Elevates the intravesicular pH of normally acidic compartments, such as trans-Golgi network, preventing newly formed hemagglutinin from premature switching to the fusion-active conformation.</text>
</comment>
<comment type="activity regulation">
    <text>The M2 protein from most influenza A strains is inhibited by amantadine and rimantadine, resulting in viral uncoating incapacity. Emergence of amantadine-resistant variants is usually rapid.</text>
</comment>
<comment type="subunit">
    <text evidence="1">Homotetramer; composed of two disulfide-linked dimers held together by non-covalent interactions. May interact with matrix protein 1.</text>
</comment>
<comment type="subcellular location">
    <subcellularLocation>
        <location evidence="1">Virion membrane</location>
    </subcellularLocation>
    <subcellularLocation>
        <location evidence="1">Host apical cell membrane</location>
        <topology evidence="1">Single-pass type III membrane protein</topology>
    </subcellularLocation>
    <text evidence="1">Abundantly expressed at the apical plasma membrane in infected polarized epithelial cells, in close proximity to budding and assembled virions. Minor component of virions (only 16-20 molecules/virion).</text>
</comment>
<comment type="alternative products">
    <event type="alternative splicing"/>
    <isoform>
        <id>Q20NW0-1</id>
        <name>M2</name>
        <sequence type="displayed"/>
    </isoform>
    <isoform>
        <id>Q20NV9-1</id>
        <name>M1</name>
        <sequence type="external"/>
    </isoform>
    <text>Only the first 9 residues are shared by the 2 isoforms.</text>
</comment>
<comment type="domain">
    <text evidence="1">Cytoplasmic tail plays an important role in virion assembly and morphogenesis.</text>
</comment>
<comment type="miscellaneous">
    <text evidence="1">When the channel is activated, one or more imidazole moieties of His-37 probably become bi-protonated.</text>
</comment>
<comment type="similarity">
    <text evidence="1">Belongs to the influenza viruses matrix protein M2 family.</text>
</comment>
<name>M2_I80AD</name>
<proteinExistence type="inferred from homology"/>
<sequence length="97" mass="11198">MSLLTEVETHTRSGWECRCNDSSDPLVIAASIIGILHLILWILDRLFFKCIYRRLKYGLKRGPSTEGVPESMREEYQQEKQSAVDVDDGHFVNIELE</sequence>
<evidence type="ECO:0000255" key="1">
    <source>
        <dbReference type="HAMAP-Rule" id="MF_04069"/>
    </source>
</evidence>
<evidence type="ECO:0000256" key="2">
    <source>
        <dbReference type="SAM" id="MobiDB-lite"/>
    </source>
</evidence>
<dbReference type="EMBL" id="CY005859">
    <property type="protein sequence ID" value="ABB21763.1"/>
    <property type="molecule type" value="Genomic_RNA"/>
</dbReference>
<dbReference type="SMR" id="Q20NW0"/>
<dbReference type="GlyCosmos" id="Q20NW0">
    <property type="glycosylation" value="1 site, No reported glycans"/>
</dbReference>
<dbReference type="Proteomes" id="UP000008581">
    <property type="component" value="Genome"/>
</dbReference>
<dbReference type="GO" id="GO:0020002">
    <property type="term" value="C:host cell plasma membrane"/>
    <property type="evidence" value="ECO:0007669"/>
    <property type="project" value="UniProtKB-SubCell"/>
</dbReference>
<dbReference type="GO" id="GO:0016020">
    <property type="term" value="C:membrane"/>
    <property type="evidence" value="ECO:0007669"/>
    <property type="project" value="UniProtKB-UniRule"/>
</dbReference>
<dbReference type="GO" id="GO:0055036">
    <property type="term" value="C:virion membrane"/>
    <property type="evidence" value="ECO:0007669"/>
    <property type="project" value="UniProtKB-SubCell"/>
</dbReference>
<dbReference type="GO" id="GO:0005216">
    <property type="term" value="F:monoatomic ion channel activity"/>
    <property type="evidence" value="ECO:0007669"/>
    <property type="project" value="UniProtKB-UniRule"/>
</dbReference>
<dbReference type="GO" id="GO:0015078">
    <property type="term" value="F:proton transmembrane transporter activity"/>
    <property type="evidence" value="ECO:0007669"/>
    <property type="project" value="UniProtKB-UniRule"/>
</dbReference>
<dbReference type="GO" id="GO:0051259">
    <property type="term" value="P:protein complex oligomerization"/>
    <property type="evidence" value="ECO:0007669"/>
    <property type="project" value="UniProtKB-UniRule"/>
</dbReference>
<dbReference type="GO" id="GO:0044694">
    <property type="term" value="P:symbiont genome entry into host cell via pore formation in plasma membrane"/>
    <property type="evidence" value="ECO:0007669"/>
    <property type="project" value="UniProtKB-UniRule"/>
</dbReference>
<dbReference type="GO" id="GO:0140321">
    <property type="term" value="P:symbiont-mediated suppression of host autophagy"/>
    <property type="evidence" value="ECO:0007669"/>
    <property type="project" value="UniProtKB-KW"/>
</dbReference>
<dbReference type="Gene3D" id="6.10.250.1640">
    <property type="match status" value="1"/>
</dbReference>
<dbReference type="HAMAP" id="MF_04069">
    <property type="entry name" value="INFV_M2"/>
    <property type="match status" value="1"/>
</dbReference>
<dbReference type="InterPro" id="IPR002089">
    <property type="entry name" value="Flu_M2"/>
</dbReference>
<dbReference type="Pfam" id="PF00599">
    <property type="entry name" value="Flu_M2"/>
    <property type="match status" value="1"/>
</dbReference>
<organism>
    <name type="scientific">Influenza A virus (strain A/Gull/Minnesota/945/1980 H13N6)</name>
    <dbReference type="NCBI Taxonomy" id="385597"/>
    <lineage>
        <taxon>Viruses</taxon>
        <taxon>Riboviria</taxon>
        <taxon>Orthornavirae</taxon>
        <taxon>Negarnaviricota</taxon>
        <taxon>Polyploviricotina</taxon>
        <taxon>Insthoviricetes</taxon>
        <taxon>Articulavirales</taxon>
        <taxon>Orthomyxoviridae</taxon>
        <taxon>Alphainfluenzavirus</taxon>
        <taxon>Alphainfluenzavirus influenzae</taxon>
        <taxon>Influenza A virus</taxon>
    </lineage>
</organism>
<feature type="chain" id="PRO_0000326374" description="Matrix protein 2">
    <location>
        <begin position="1"/>
        <end position="97"/>
    </location>
</feature>
<feature type="topological domain" description="Virion surface" evidence="1">
    <location>
        <begin position="1"/>
        <end position="22"/>
    </location>
</feature>
<feature type="transmembrane region" description="Helical; Signal-anchor for type III membrane protein" evidence="1">
    <location>
        <begin position="23"/>
        <end position="43"/>
    </location>
</feature>
<feature type="topological domain" description="Intravirion" evidence="1">
    <location>
        <begin position="44"/>
        <end position="97"/>
    </location>
</feature>
<feature type="region of interest" description="Disordered" evidence="2">
    <location>
        <begin position="60"/>
        <end position="84"/>
    </location>
</feature>
<feature type="site" description="Essential for channel activity, possibly by being protonated during channel activation, and by forming the channel gate and the selective filter" evidence="1">
    <location>
        <position position="37"/>
    </location>
</feature>
<feature type="site" description="Seems to be involved in pH gating" evidence="1">
    <location>
        <position position="41"/>
    </location>
</feature>
<feature type="modified residue" description="Phosphoserine; by host" evidence="1">
    <location>
        <position position="64"/>
    </location>
</feature>
<feature type="modified residue" description="Phosphoserine; by host" evidence="1">
    <location>
        <position position="82"/>
    </location>
</feature>
<feature type="lipid moiety-binding region" description="S-palmitoyl cysteine; by host" evidence="1">
    <location>
        <position position="50"/>
    </location>
</feature>
<feature type="glycosylation site" description="N-linked (GlcNAc...) asparagine; by host" evidence="1">
    <location>
        <position position="20"/>
    </location>
</feature>
<feature type="disulfide bond" description="Interchain (with C-17)" evidence="1">
    <location>
        <position position="17"/>
    </location>
</feature>
<feature type="disulfide bond" description="Interchain (with C-19)" evidence="1">
    <location>
        <position position="19"/>
    </location>
</feature>
<organismHost>
    <name type="scientific">Aves</name>
    <dbReference type="NCBI Taxonomy" id="8782"/>
</organismHost>
<protein>
    <recommendedName>
        <fullName evidence="1">Matrix protein 2</fullName>
    </recommendedName>
    <alternativeName>
        <fullName evidence="1">Proton channel protein M2</fullName>
    </alternativeName>
</protein>
<accession>Q20NW0</accession>